<reference key="1">
    <citation type="submission" date="2008-10" db="EMBL/GenBank/DDBJ databases">
        <title>Genome sequence of Bacillus anthracis str. CDC 684.</title>
        <authorList>
            <person name="Dodson R.J."/>
            <person name="Munk A.C."/>
            <person name="Brettin T."/>
            <person name="Bruce D."/>
            <person name="Detter C."/>
            <person name="Tapia R."/>
            <person name="Han C."/>
            <person name="Sutton G."/>
            <person name="Sims D."/>
        </authorList>
    </citation>
    <scope>NUCLEOTIDE SEQUENCE [LARGE SCALE GENOMIC DNA]</scope>
    <source>
        <strain>CDC 684 / NRRL 3495</strain>
    </source>
</reference>
<feature type="chain" id="PRO_1000199035" description="Cysteine--tRNA ligase">
    <location>
        <begin position="1"/>
        <end position="465"/>
    </location>
</feature>
<feature type="short sequence motif" description="'HIGH' region">
    <location>
        <begin position="31"/>
        <end position="41"/>
    </location>
</feature>
<feature type="short sequence motif" description="'KMSKS' region">
    <location>
        <begin position="266"/>
        <end position="270"/>
    </location>
</feature>
<feature type="binding site" evidence="1">
    <location>
        <position position="29"/>
    </location>
    <ligand>
        <name>Zn(2+)</name>
        <dbReference type="ChEBI" id="CHEBI:29105"/>
    </ligand>
</feature>
<feature type="binding site" evidence="1">
    <location>
        <position position="209"/>
    </location>
    <ligand>
        <name>Zn(2+)</name>
        <dbReference type="ChEBI" id="CHEBI:29105"/>
    </ligand>
</feature>
<feature type="binding site" evidence="1">
    <location>
        <position position="234"/>
    </location>
    <ligand>
        <name>Zn(2+)</name>
        <dbReference type="ChEBI" id="CHEBI:29105"/>
    </ligand>
</feature>
<feature type="binding site" evidence="1">
    <location>
        <position position="238"/>
    </location>
    <ligand>
        <name>Zn(2+)</name>
        <dbReference type="ChEBI" id="CHEBI:29105"/>
    </ligand>
</feature>
<feature type="binding site" evidence="1">
    <location>
        <position position="269"/>
    </location>
    <ligand>
        <name>ATP</name>
        <dbReference type="ChEBI" id="CHEBI:30616"/>
    </ligand>
</feature>
<feature type="modified residue" description="Phosphoserine" evidence="1">
    <location>
        <position position="270"/>
    </location>
</feature>
<accession>C3LJ62</accession>
<sequence length="465" mass="53937">MTIHIYNTLTRQKEEFTPLEENKVKMYVCGPTVYNYIHIGNARPPMVFDTVRRYLEYKGYDVQYVSNFTDVDDKLIKAANELGEDVPTIADRFVEAYFEDVTALGCKHATVHPRVTENMDIIIEFIQELVNKGYAYESEGDVYFRTKEFEGYGKLSHQPIADLRHGARIEVGEKKQDPLDFALWKAAKEGEIFWESPWGQGRPGWHIECSAMARKYLGDTIDIHAGGQDLAFPHHENEIAQSEALTGKTFARYWMHNGYININNEKMSKSLGNFILVHDIIKQYDPQLIRFFMLSVHYRHPINFSEELLQSTNNGLERIKTAYGNLKHRMESSTDLTDHNEKWLADLEKFQTAFEEAMNDDFNTANAITELYNVANHANQYLLEEHTSTVVIEAYVKQLETLFDILGLELAQEELLDEEIEALIQKRIEARKNRDFALSDQIRDDLKDRNIILEDTAQGTRWKRG</sequence>
<proteinExistence type="inferred from homology"/>
<organism>
    <name type="scientific">Bacillus anthracis (strain CDC 684 / NRRL 3495)</name>
    <dbReference type="NCBI Taxonomy" id="568206"/>
    <lineage>
        <taxon>Bacteria</taxon>
        <taxon>Bacillati</taxon>
        <taxon>Bacillota</taxon>
        <taxon>Bacilli</taxon>
        <taxon>Bacillales</taxon>
        <taxon>Bacillaceae</taxon>
        <taxon>Bacillus</taxon>
        <taxon>Bacillus cereus group</taxon>
    </lineage>
</organism>
<comment type="catalytic activity">
    <reaction evidence="1">
        <text>tRNA(Cys) + L-cysteine + ATP = L-cysteinyl-tRNA(Cys) + AMP + diphosphate</text>
        <dbReference type="Rhea" id="RHEA:17773"/>
        <dbReference type="Rhea" id="RHEA-COMP:9661"/>
        <dbReference type="Rhea" id="RHEA-COMP:9679"/>
        <dbReference type="ChEBI" id="CHEBI:30616"/>
        <dbReference type="ChEBI" id="CHEBI:33019"/>
        <dbReference type="ChEBI" id="CHEBI:35235"/>
        <dbReference type="ChEBI" id="CHEBI:78442"/>
        <dbReference type="ChEBI" id="CHEBI:78517"/>
        <dbReference type="ChEBI" id="CHEBI:456215"/>
        <dbReference type="EC" id="6.1.1.16"/>
    </reaction>
</comment>
<comment type="cofactor">
    <cofactor evidence="1">
        <name>Zn(2+)</name>
        <dbReference type="ChEBI" id="CHEBI:29105"/>
    </cofactor>
    <text evidence="1">Binds 1 zinc ion per subunit.</text>
</comment>
<comment type="subunit">
    <text evidence="1">Monomer.</text>
</comment>
<comment type="subcellular location">
    <subcellularLocation>
        <location evidence="1">Cytoplasm</location>
    </subcellularLocation>
</comment>
<comment type="similarity">
    <text evidence="1">Belongs to the class-I aminoacyl-tRNA synthetase family.</text>
</comment>
<evidence type="ECO:0000255" key="1">
    <source>
        <dbReference type="HAMAP-Rule" id="MF_00041"/>
    </source>
</evidence>
<name>SYC_BACAC</name>
<keyword id="KW-0030">Aminoacyl-tRNA synthetase</keyword>
<keyword id="KW-0067">ATP-binding</keyword>
<keyword id="KW-0963">Cytoplasm</keyword>
<keyword id="KW-0436">Ligase</keyword>
<keyword id="KW-0479">Metal-binding</keyword>
<keyword id="KW-0547">Nucleotide-binding</keyword>
<keyword id="KW-0597">Phosphoprotein</keyword>
<keyword id="KW-0648">Protein biosynthesis</keyword>
<keyword id="KW-0862">Zinc</keyword>
<protein>
    <recommendedName>
        <fullName evidence="1">Cysteine--tRNA ligase</fullName>
        <ecNumber evidence="1">6.1.1.16</ecNumber>
    </recommendedName>
    <alternativeName>
        <fullName evidence="1">Cysteinyl-tRNA synthetase</fullName>
        <shortName evidence="1">CysRS</shortName>
    </alternativeName>
</protein>
<gene>
    <name evidence="1" type="primary">cysS</name>
    <name type="ordered locus">BAMEG_0105</name>
</gene>
<dbReference type="EC" id="6.1.1.16" evidence="1"/>
<dbReference type="EMBL" id="CP001215">
    <property type="protein sequence ID" value="ACP14693.1"/>
    <property type="molecule type" value="Genomic_DNA"/>
</dbReference>
<dbReference type="RefSeq" id="WP_000152268.1">
    <property type="nucleotide sequence ID" value="NC_012581.1"/>
</dbReference>
<dbReference type="SMR" id="C3LJ62"/>
<dbReference type="GeneID" id="45020134"/>
<dbReference type="KEGG" id="bah:BAMEG_0105"/>
<dbReference type="HOGENOM" id="CLU_013528_0_1_9"/>
<dbReference type="GO" id="GO:0005829">
    <property type="term" value="C:cytosol"/>
    <property type="evidence" value="ECO:0007669"/>
    <property type="project" value="TreeGrafter"/>
</dbReference>
<dbReference type="GO" id="GO:0005524">
    <property type="term" value="F:ATP binding"/>
    <property type="evidence" value="ECO:0007669"/>
    <property type="project" value="UniProtKB-UniRule"/>
</dbReference>
<dbReference type="GO" id="GO:0004817">
    <property type="term" value="F:cysteine-tRNA ligase activity"/>
    <property type="evidence" value="ECO:0007669"/>
    <property type="project" value="UniProtKB-UniRule"/>
</dbReference>
<dbReference type="GO" id="GO:0008270">
    <property type="term" value="F:zinc ion binding"/>
    <property type="evidence" value="ECO:0007669"/>
    <property type="project" value="UniProtKB-UniRule"/>
</dbReference>
<dbReference type="GO" id="GO:0006423">
    <property type="term" value="P:cysteinyl-tRNA aminoacylation"/>
    <property type="evidence" value="ECO:0007669"/>
    <property type="project" value="UniProtKB-UniRule"/>
</dbReference>
<dbReference type="CDD" id="cd00672">
    <property type="entry name" value="CysRS_core"/>
    <property type="match status" value="1"/>
</dbReference>
<dbReference type="FunFam" id="1.20.120.1910:FF:000002">
    <property type="entry name" value="Cysteine--tRNA ligase"/>
    <property type="match status" value="1"/>
</dbReference>
<dbReference type="FunFam" id="3.40.50.620:FF:000009">
    <property type="entry name" value="Cysteine--tRNA ligase"/>
    <property type="match status" value="1"/>
</dbReference>
<dbReference type="Gene3D" id="1.20.120.1910">
    <property type="entry name" value="Cysteine-tRNA ligase, C-terminal anti-codon recognition domain"/>
    <property type="match status" value="1"/>
</dbReference>
<dbReference type="Gene3D" id="3.40.50.620">
    <property type="entry name" value="HUPs"/>
    <property type="match status" value="1"/>
</dbReference>
<dbReference type="HAMAP" id="MF_00041">
    <property type="entry name" value="Cys_tRNA_synth"/>
    <property type="match status" value="1"/>
</dbReference>
<dbReference type="InterPro" id="IPR015803">
    <property type="entry name" value="Cys-tRNA-ligase"/>
</dbReference>
<dbReference type="InterPro" id="IPR015273">
    <property type="entry name" value="Cys-tRNA-synt_Ia_DALR"/>
</dbReference>
<dbReference type="InterPro" id="IPR024909">
    <property type="entry name" value="Cys-tRNA/MSH_ligase"/>
</dbReference>
<dbReference type="InterPro" id="IPR014729">
    <property type="entry name" value="Rossmann-like_a/b/a_fold"/>
</dbReference>
<dbReference type="InterPro" id="IPR032678">
    <property type="entry name" value="tRNA-synt_1_cat_dom"/>
</dbReference>
<dbReference type="InterPro" id="IPR009080">
    <property type="entry name" value="tRNAsynth_Ia_anticodon-bd"/>
</dbReference>
<dbReference type="NCBIfam" id="TIGR00435">
    <property type="entry name" value="cysS"/>
    <property type="match status" value="1"/>
</dbReference>
<dbReference type="PANTHER" id="PTHR10890:SF3">
    <property type="entry name" value="CYSTEINE--TRNA LIGASE, CYTOPLASMIC"/>
    <property type="match status" value="1"/>
</dbReference>
<dbReference type="PANTHER" id="PTHR10890">
    <property type="entry name" value="CYSTEINYL-TRNA SYNTHETASE"/>
    <property type="match status" value="1"/>
</dbReference>
<dbReference type="Pfam" id="PF09190">
    <property type="entry name" value="DALR_2"/>
    <property type="match status" value="1"/>
</dbReference>
<dbReference type="Pfam" id="PF01406">
    <property type="entry name" value="tRNA-synt_1e"/>
    <property type="match status" value="1"/>
</dbReference>
<dbReference type="PRINTS" id="PR00983">
    <property type="entry name" value="TRNASYNTHCYS"/>
</dbReference>
<dbReference type="SMART" id="SM00840">
    <property type="entry name" value="DALR_2"/>
    <property type="match status" value="1"/>
</dbReference>
<dbReference type="SUPFAM" id="SSF47323">
    <property type="entry name" value="Anticodon-binding domain of a subclass of class I aminoacyl-tRNA synthetases"/>
    <property type="match status" value="1"/>
</dbReference>
<dbReference type="SUPFAM" id="SSF52374">
    <property type="entry name" value="Nucleotidylyl transferase"/>
    <property type="match status" value="1"/>
</dbReference>